<organism>
    <name type="scientific">Prochlorococcus marinus (strain SARG / CCMP1375 / SS120)</name>
    <dbReference type="NCBI Taxonomy" id="167539"/>
    <lineage>
        <taxon>Bacteria</taxon>
        <taxon>Bacillati</taxon>
        <taxon>Cyanobacteriota</taxon>
        <taxon>Cyanophyceae</taxon>
        <taxon>Synechococcales</taxon>
        <taxon>Prochlorococcaceae</taxon>
        <taxon>Prochlorococcus</taxon>
    </lineage>
</organism>
<comment type="function">
    <text evidence="2">With S4 and S5 plays an important role in translational accuracy.</text>
</comment>
<comment type="function">
    <text evidence="2">Interacts with and stabilizes bases of the 16S rRNA that are involved in tRNA selection in the A site and with the mRNA backbone. Located at the interface of the 30S and 50S subunits, it traverses the body of the 30S subunit contacting proteins on the other side and probably holding the rRNA structure together. The combined cluster of proteins S8, S12 and S17 appears to hold together the shoulder and platform of the 30S subunit.</text>
</comment>
<comment type="subunit">
    <text evidence="2">Part of the 30S ribosomal subunit. Contacts proteins S8 and S17. May interact with IF1 in the 30S initiation complex.</text>
</comment>
<comment type="similarity">
    <text evidence="2">Belongs to the universal ribosomal protein uS12 family.</text>
</comment>
<dbReference type="EMBL" id="AE017126">
    <property type="protein sequence ID" value="AAQ00711.1"/>
    <property type="molecule type" value="Genomic_DNA"/>
</dbReference>
<dbReference type="RefSeq" id="NP_876058.1">
    <property type="nucleotide sequence ID" value="NC_005042.1"/>
</dbReference>
<dbReference type="RefSeq" id="WP_011125816.1">
    <property type="nucleotide sequence ID" value="NC_005042.1"/>
</dbReference>
<dbReference type="SMR" id="Q7VA02"/>
<dbReference type="STRING" id="167539.Pro_1667"/>
<dbReference type="EnsemblBacteria" id="AAQ00711">
    <property type="protein sequence ID" value="AAQ00711"/>
    <property type="gene ID" value="Pro_1667"/>
</dbReference>
<dbReference type="KEGG" id="pma:Pro_1667"/>
<dbReference type="PATRIC" id="fig|167539.5.peg.1761"/>
<dbReference type="eggNOG" id="COG0048">
    <property type="taxonomic scope" value="Bacteria"/>
</dbReference>
<dbReference type="HOGENOM" id="CLU_104295_1_2_3"/>
<dbReference type="OrthoDB" id="9802366at2"/>
<dbReference type="Proteomes" id="UP000001420">
    <property type="component" value="Chromosome"/>
</dbReference>
<dbReference type="GO" id="GO:0015935">
    <property type="term" value="C:small ribosomal subunit"/>
    <property type="evidence" value="ECO:0007669"/>
    <property type="project" value="InterPro"/>
</dbReference>
<dbReference type="GO" id="GO:0019843">
    <property type="term" value="F:rRNA binding"/>
    <property type="evidence" value="ECO:0007669"/>
    <property type="project" value="UniProtKB-UniRule"/>
</dbReference>
<dbReference type="GO" id="GO:0003735">
    <property type="term" value="F:structural constituent of ribosome"/>
    <property type="evidence" value="ECO:0007669"/>
    <property type="project" value="InterPro"/>
</dbReference>
<dbReference type="GO" id="GO:0000049">
    <property type="term" value="F:tRNA binding"/>
    <property type="evidence" value="ECO:0007669"/>
    <property type="project" value="UniProtKB-UniRule"/>
</dbReference>
<dbReference type="GO" id="GO:0006412">
    <property type="term" value="P:translation"/>
    <property type="evidence" value="ECO:0007669"/>
    <property type="project" value="UniProtKB-UniRule"/>
</dbReference>
<dbReference type="CDD" id="cd03368">
    <property type="entry name" value="Ribosomal_S12"/>
    <property type="match status" value="1"/>
</dbReference>
<dbReference type="FunFam" id="2.40.50.140:FF:000001">
    <property type="entry name" value="30S ribosomal protein S12"/>
    <property type="match status" value="1"/>
</dbReference>
<dbReference type="Gene3D" id="2.40.50.140">
    <property type="entry name" value="Nucleic acid-binding proteins"/>
    <property type="match status" value="1"/>
</dbReference>
<dbReference type="HAMAP" id="MF_00403_B">
    <property type="entry name" value="Ribosomal_uS12_B"/>
    <property type="match status" value="1"/>
</dbReference>
<dbReference type="InterPro" id="IPR012340">
    <property type="entry name" value="NA-bd_OB-fold"/>
</dbReference>
<dbReference type="InterPro" id="IPR006032">
    <property type="entry name" value="Ribosomal_uS12"/>
</dbReference>
<dbReference type="InterPro" id="IPR005679">
    <property type="entry name" value="Ribosomal_uS12_bac"/>
</dbReference>
<dbReference type="NCBIfam" id="TIGR00981">
    <property type="entry name" value="rpsL_bact"/>
    <property type="match status" value="1"/>
</dbReference>
<dbReference type="PANTHER" id="PTHR11652">
    <property type="entry name" value="30S RIBOSOMAL PROTEIN S12 FAMILY MEMBER"/>
    <property type="match status" value="1"/>
</dbReference>
<dbReference type="Pfam" id="PF00164">
    <property type="entry name" value="Ribosom_S12_S23"/>
    <property type="match status" value="1"/>
</dbReference>
<dbReference type="PIRSF" id="PIRSF002133">
    <property type="entry name" value="Ribosomal_S12/S23"/>
    <property type="match status" value="1"/>
</dbReference>
<dbReference type="PRINTS" id="PR01034">
    <property type="entry name" value="RIBOSOMALS12"/>
</dbReference>
<dbReference type="SUPFAM" id="SSF50249">
    <property type="entry name" value="Nucleic acid-binding proteins"/>
    <property type="match status" value="1"/>
</dbReference>
<dbReference type="PROSITE" id="PS00055">
    <property type="entry name" value="RIBOSOMAL_S12"/>
    <property type="match status" value="1"/>
</dbReference>
<protein>
    <recommendedName>
        <fullName evidence="2">Small ribosomal subunit protein uS12</fullName>
    </recommendedName>
    <alternativeName>
        <fullName evidence="3">30S ribosomal protein S12</fullName>
    </alternativeName>
</protein>
<accession>Q7VA02</accession>
<feature type="chain" id="PRO_0000146287" description="Small ribosomal subunit protein uS12">
    <location>
        <begin position="1"/>
        <end position="124"/>
    </location>
</feature>
<feature type="modified residue" description="3-methylthioaspartic acid" evidence="1">
    <location>
        <position position="89"/>
    </location>
</feature>
<name>RS12_PROMA</name>
<proteinExistence type="inferred from homology"/>
<evidence type="ECO:0000250" key="1"/>
<evidence type="ECO:0000255" key="2">
    <source>
        <dbReference type="HAMAP-Rule" id="MF_00403"/>
    </source>
</evidence>
<evidence type="ECO:0000305" key="3"/>
<gene>
    <name evidence="2" type="primary">rpsL</name>
    <name evidence="2" type="synonym">rps12</name>
    <name type="ordered locus">Pro_1667</name>
</gene>
<reference key="1">
    <citation type="journal article" date="2003" name="Proc. Natl. Acad. Sci. U.S.A.">
        <title>Genome sequence of the cyanobacterium Prochlorococcus marinus SS120, a nearly minimal oxyphototrophic genome.</title>
        <authorList>
            <person name="Dufresne A."/>
            <person name="Salanoubat M."/>
            <person name="Partensky F."/>
            <person name="Artiguenave F."/>
            <person name="Axmann I.M."/>
            <person name="Barbe V."/>
            <person name="Duprat S."/>
            <person name="Galperin M.Y."/>
            <person name="Koonin E.V."/>
            <person name="Le Gall F."/>
            <person name="Makarova K.S."/>
            <person name="Ostrowski M."/>
            <person name="Oztas S."/>
            <person name="Robert C."/>
            <person name="Rogozin I.B."/>
            <person name="Scanlan D.J."/>
            <person name="Tandeau de Marsac N."/>
            <person name="Weissenbach J."/>
            <person name="Wincker P."/>
            <person name="Wolf Y.I."/>
            <person name="Hess W.R."/>
        </authorList>
    </citation>
    <scope>NUCLEOTIDE SEQUENCE [LARGE SCALE GENOMIC DNA]</scope>
    <source>
        <strain>SARG / CCMP1375 / SS120</strain>
    </source>
</reference>
<keyword id="KW-0488">Methylation</keyword>
<keyword id="KW-1185">Reference proteome</keyword>
<keyword id="KW-0687">Ribonucleoprotein</keyword>
<keyword id="KW-0689">Ribosomal protein</keyword>
<keyword id="KW-0694">RNA-binding</keyword>
<keyword id="KW-0699">rRNA-binding</keyword>
<keyword id="KW-0820">tRNA-binding</keyword>
<sequence length="124" mass="13917">MPTIQQLIRTERQRLTRKTKSPALRSCPERRGVCTRVYTSTPKKPNSALRKVARVRLTSGFEVTAYIPGIGHNLQEHSVVLLRGGRVKDLPGVRYHIIRGTLDTAGVKDRRQARSKYGAKAPKS</sequence>